<sequence>MYTEINEMLTPKVLKVQAESPYKARIVLEPLERGFGHTLGNALRRILLSSMPGSAITEASIDGVLHEYSTIEGVQEDVVDLLLNLKSVAIKLTVGNEAQVTLNKEGPCQVTAGDIQLTHGQEIINPELVIANLNEKGKLNMTLKVERGIGFHNTDAFVRYHDDEIEKKTVGKLKIDNSFSPVKKVAYFVDSARVENRTDLDKLTIELETNGTIDAEEAIRISASILQRQLHAFVDMKFEESRADNKERNDFDPVLLRSVDDLELTVRSANCLKAENIHYIGDLVQRTESELLKTPNLGKKSLTEIKDVLASRSLSLGMKLENWPPASLGE</sequence>
<keyword id="KW-0240">DNA-directed RNA polymerase</keyword>
<keyword id="KW-0548">Nucleotidyltransferase</keyword>
<keyword id="KW-0804">Transcription</keyword>
<keyword id="KW-0808">Transferase</keyword>
<name>RPOA_LEGPA</name>
<proteinExistence type="inferred from homology"/>
<comment type="function">
    <text evidence="1">DNA-dependent RNA polymerase catalyzes the transcription of DNA into RNA using the four ribonucleoside triphosphates as substrates.</text>
</comment>
<comment type="catalytic activity">
    <reaction evidence="1">
        <text>RNA(n) + a ribonucleoside 5'-triphosphate = RNA(n+1) + diphosphate</text>
        <dbReference type="Rhea" id="RHEA:21248"/>
        <dbReference type="Rhea" id="RHEA-COMP:14527"/>
        <dbReference type="Rhea" id="RHEA-COMP:17342"/>
        <dbReference type="ChEBI" id="CHEBI:33019"/>
        <dbReference type="ChEBI" id="CHEBI:61557"/>
        <dbReference type="ChEBI" id="CHEBI:140395"/>
        <dbReference type="EC" id="2.7.7.6"/>
    </reaction>
</comment>
<comment type="subunit">
    <text evidence="1">Homodimer. The RNAP catalytic core consists of 2 alpha, 1 beta, 1 beta' and 1 omega subunit. When a sigma factor is associated with the core the holoenzyme is formed, which can initiate transcription.</text>
</comment>
<comment type="domain">
    <text evidence="1">The N-terminal domain is essential for RNAP assembly and basal transcription, whereas the C-terminal domain is involved in interaction with transcriptional regulators and with upstream promoter elements.</text>
</comment>
<comment type="similarity">
    <text evidence="1">Belongs to the RNA polymerase alpha chain family.</text>
</comment>
<evidence type="ECO:0000255" key="1">
    <source>
        <dbReference type="HAMAP-Rule" id="MF_00059"/>
    </source>
</evidence>
<accession>Q5X834</accession>
<gene>
    <name evidence="1" type="primary">rpoA</name>
    <name type="ordered locus">lpp0419</name>
</gene>
<reference key="1">
    <citation type="journal article" date="2004" name="Nat. Genet.">
        <title>Evidence in the Legionella pneumophila genome for exploitation of host cell functions and high genome plasticity.</title>
        <authorList>
            <person name="Cazalet C."/>
            <person name="Rusniok C."/>
            <person name="Brueggemann H."/>
            <person name="Zidane N."/>
            <person name="Magnier A."/>
            <person name="Ma L."/>
            <person name="Tichit M."/>
            <person name="Jarraud S."/>
            <person name="Bouchier C."/>
            <person name="Vandenesch F."/>
            <person name="Kunst F."/>
            <person name="Etienne J."/>
            <person name="Glaser P."/>
            <person name="Buchrieser C."/>
        </authorList>
    </citation>
    <scope>NUCLEOTIDE SEQUENCE [LARGE SCALE GENOMIC DNA]</scope>
    <source>
        <strain>Paris</strain>
    </source>
</reference>
<organism>
    <name type="scientific">Legionella pneumophila (strain Paris)</name>
    <dbReference type="NCBI Taxonomy" id="297246"/>
    <lineage>
        <taxon>Bacteria</taxon>
        <taxon>Pseudomonadati</taxon>
        <taxon>Pseudomonadota</taxon>
        <taxon>Gammaproteobacteria</taxon>
        <taxon>Legionellales</taxon>
        <taxon>Legionellaceae</taxon>
        <taxon>Legionella</taxon>
    </lineage>
</organism>
<feature type="chain" id="PRO_0000175322" description="DNA-directed RNA polymerase subunit alpha">
    <location>
        <begin position="1"/>
        <end position="330"/>
    </location>
</feature>
<feature type="region of interest" description="Alpha N-terminal domain (alpha-NTD)" evidence="1">
    <location>
        <begin position="1"/>
        <end position="237"/>
    </location>
</feature>
<feature type="region of interest" description="Alpha C-terminal domain (alpha-CTD)" evidence="1">
    <location>
        <begin position="251"/>
        <end position="330"/>
    </location>
</feature>
<dbReference type="EC" id="2.7.7.6" evidence="1"/>
<dbReference type="EMBL" id="CR628336">
    <property type="protein sequence ID" value="CAH11567.1"/>
    <property type="molecule type" value="Genomic_DNA"/>
</dbReference>
<dbReference type="RefSeq" id="WP_011213014.1">
    <property type="nucleotide sequence ID" value="NC_006368.1"/>
</dbReference>
<dbReference type="SMR" id="Q5X834"/>
<dbReference type="KEGG" id="lpp:lpp0419"/>
<dbReference type="LegioList" id="lpp0419"/>
<dbReference type="HOGENOM" id="CLU_053084_0_0_6"/>
<dbReference type="GO" id="GO:0005737">
    <property type="term" value="C:cytoplasm"/>
    <property type="evidence" value="ECO:0007669"/>
    <property type="project" value="UniProtKB-ARBA"/>
</dbReference>
<dbReference type="GO" id="GO:0000428">
    <property type="term" value="C:DNA-directed RNA polymerase complex"/>
    <property type="evidence" value="ECO:0007669"/>
    <property type="project" value="UniProtKB-KW"/>
</dbReference>
<dbReference type="GO" id="GO:0003677">
    <property type="term" value="F:DNA binding"/>
    <property type="evidence" value="ECO:0007669"/>
    <property type="project" value="UniProtKB-UniRule"/>
</dbReference>
<dbReference type="GO" id="GO:0003899">
    <property type="term" value="F:DNA-directed RNA polymerase activity"/>
    <property type="evidence" value="ECO:0007669"/>
    <property type="project" value="UniProtKB-UniRule"/>
</dbReference>
<dbReference type="GO" id="GO:0046983">
    <property type="term" value="F:protein dimerization activity"/>
    <property type="evidence" value="ECO:0007669"/>
    <property type="project" value="InterPro"/>
</dbReference>
<dbReference type="GO" id="GO:0006351">
    <property type="term" value="P:DNA-templated transcription"/>
    <property type="evidence" value="ECO:0007669"/>
    <property type="project" value="UniProtKB-UniRule"/>
</dbReference>
<dbReference type="CDD" id="cd06928">
    <property type="entry name" value="RNAP_alpha_NTD"/>
    <property type="match status" value="1"/>
</dbReference>
<dbReference type="FunFam" id="1.10.150.20:FF:000001">
    <property type="entry name" value="DNA-directed RNA polymerase subunit alpha"/>
    <property type="match status" value="1"/>
</dbReference>
<dbReference type="FunFam" id="2.170.120.12:FF:000001">
    <property type="entry name" value="DNA-directed RNA polymerase subunit alpha"/>
    <property type="match status" value="1"/>
</dbReference>
<dbReference type="Gene3D" id="1.10.150.20">
    <property type="entry name" value="5' to 3' exonuclease, C-terminal subdomain"/>
    <property type="match status" value="1"/>
</dbReference>
<dbReference type="Gene3D" id="2.170.120.12">
    <property type="entry name" value="DNA-directed RNA polymerase, insert domain"/>
    <property type="match status" value="1"/>
</dbReference>
<dbReference type="Gene3D" id="3.30.1360.10">
    <property type="entry name" value="RNA polymerase, RBP11-like subunit"/>
    <property type="match status" value="1"/>
</dbReference>
<dbReference type="HAMAP" id="MF_00059">
    <property type="entry name" value="RNApol_bact_RpoA"/>
    <property type="match status" value="1"/>
</dbReference>
<dbReference type="InterPro" id="IPR011262">
    <property type="entry name" value="DNA-dir_RNA_pol_insert"/>
</dbReference>
<dbReference type="InterPro" id="IPR011263">
    <property type="entry name" value="DNA-dir_RNA_pol_RpoA/D/Rpb3"/>
</dbReference>
<dbReference type="InterPro" id="IPR011773">
    <property type="entry name" value="DNA-dir_RpoA"/>
</dbReference>
<dbReference type="InterPro" id="IPR036603">
    <property type="entry name" value="RBP11-like"/>
</dbReference>
<dbReference type="InterPro" id="IPR011260">
    <property type="entry name" value="RNAP_asu_C"/>
</dbReference>
<dbReference type="InterPro" id="IPR036643">
    <property type="entry name" value="RNApol_insert_sf"/>
</dbReference>
<dbReference type="NCBIfam" id="NF003513">
    <property type="entry name" value="PRK05182.1-2"/>
    <property type="match status" value="1"/>
</dbReference>
<dbReference type="NCBIfam" id="NF003519">
    <property type="entry name" value="PRK05182.2-5"/>
    <property type="match status" value="1"/>
</dbReference>
<dbReference type="NCBIfam" id="TIGR02027">
    <property type="entry name" value="rpoA"/>
    <property type="match status" value="1"/>
</dbReference>
<dbReference type="Pfam" id="PF01000">
    <property type="entry name" value="RNA_pol_A_bac"/>
    <property type="match status" value="1"/>
</dbReference>
<dbReference type="Pfam" id="PF03118">
    <property type="entry name" value="RNA_pol_A_CTD"/>
    <property type="match status" value="1"/>
</dbReference>
<dbReference type="Pfam" id="PF01193">
    <property type="entry name" value="RNA_pol_L"/>
    <property type="match status" value="1"/>
</dbReference>
<dbReference type="SMART" id="SM00662">
    <property type="entry name" value="RPOLD"/>
    <property type="match status" value="1"/>
</dbReference>
<dbReference type="SUPFAM" id="SSF47789">
    <property type="entry name" value="C-terminal domain of RNA polymerase alpha subunit"/>
    <property type="match status" value="1"/>
</dbReference>
<dbReference type="SUPFAM" id="SSF56553">
    <property type="entry name" value="Insert subdomain of RNA polymerase alpha subunit"/>
    <property type="match status" value="1"/>
</dbReference>
<dbReference type="SUPFAM" id="SSF55257">
    <property type="entry name" value="RBP11-like subunits of RNA polymerase"/>
    <property type="match status" value="1"/>
</dbReference>
<protein>
    <recommendedName>
        <fullName evidence="1">DNA-directed RNA polymerase subunit alpha</fullName>
        <shortName evidence="1">RNAP subunit alpha</shortName>
        <ecNumber evidence="1">2.7.7.6</ecNumber>
    </recommendedName>
    <alternativeName>
        <fullName evidence="1">RNA polymerase subunit alpha</fullName>
    </alternativeName>
    <alternativeName>
        <fullName evidence="1">Transcriptase subunit alpha</fullName>
    </alternativeName>
</protein>